<evidence type="ECO:0000255" key="1">
    <source>
        <dbReference type="HAMAP-Rule" id="MF_00014"/>
    </source>
</evidence>
<gene>
    <name evidence="1" type="primary">rimM</name>
    <name type="ordered locus">RPC_0223</name>
</gene>
<feature type="chain" id="PRO_0000244158" description="Ribosome maturation factor RimM">
    <location>
        <begin position="1"/>
        <end position="176"/>
    </location>
</feature>
<feature type="domain" description="PRC barrel" evidence="1">
    <location>
        <begin position="93"/>
        <end position="166"/>
    </location>
</feature>
<proteinExistence type="inferred from homology"/>
<name>RIMM_RHOPB</name>
<dbReference type="EMBL" id="CP000301">
    <property type="protein sequence ID" value="ABD85798.1"/>
    <property type="molecule type" value="Genomic_DNA"/>
</dbReference>
<dbReference type="SMR" id="Q21CT8"/>
<dbReference type="STRING" id="316056.RPC_0223"/>
<dbReference type="KEGG" id="rpc:RPC_0223"/>
<dbReference type="eggNOG" id="COG0806">
    <property type="taxonomic scope" value="Bacteria"/>
</dbReference>
<dbReference type="HOGENOM" id="CLU_077636_0_1_5"/>
<dbReference type="OrthoDB" id="9788191at2"/>
<dbReference type="GO" id="GO:0005737">
    <property type="term" value="C:cytoplasm"/>
    <property type="evidence" value="ECO:0007669"/>
    <property type="project" value="UniProtKB-SubCell"/>
</dbReference>
<dbReference type="GO" id="GO:0005840">
    <property type="term" value="C:ribosome"/>
    <property type="evidence" value="ECO:0007669"/>
    <property type="project" value="InterPro"/>
</dbReference>
<dbReference type="GO" id="GO:0043022">
    <property type="term" value="F:ribosome binding"/>
    <property type="evidence" value="ECO:0007669"/>
    <property type="project" value="InterPro"/>
</dbReference>
<dbReference type="GO" id="GO:0042274">
    <property type="term" value="P:ribosomal small subunit biogenesis"/>
    <property type="evidence" value="ECO:0007669"/>
    <property type="project" value="UniProtKB-UniRule"/>
</dbReference>
<dbReference type="GO" id="GO:0006364">
    <property type="term" value="P:rRNA processing"/>
    <property type="evidence" value="ECO:0007669"/>
    <property type="project" value="UniProtKB-UniRule"/>
</dbReference>
<dbReference type="Gene3D" id="2.30.30.240">
    <property type="entry name" value="PRC-barrel domain"/>
    <property type="match status" value="1"/>
</dbReference>
<dbReference type="Gene3D" id="2.40.30.60">
    <property type="entry name" value="RimM"/>
    <property type="match status" value="1"/>
</dbReference>
<dbReference type="HAMAP" id="MF_00014">
    <property type="entry name" value="Ribosome_mat_RimM"/>
    <property type="match status" value="1"/>
</dbReference>
<dbReference type="InterPro" id="IPR011033">
    <property type="entry name" value="PRC_barrel-like_sf"/>
</dbReference>
<dbReference type="InterPro" id="IPR056792">
    <property type="entry name" value="PRC_RimM"/>
</dbReference>
<dbReference type="InterPro" id="IPR011961">
    <property type="entry name" value="RimM"/>
</dbReference>
<dbReference type="InterPro" id="IPR002676">
    <property type="entry name" value="RimM_N"/>
</dbReference>
<dbReference type="InterPro" id="IPR036976">
    <property type="entry name" value="RimM_N_sf"/>
</dbReference>
<dbReference type="InterPro" id="IPR009000">
    <property type="entry name" value="Transl_B-barrel_sf"/>
</dbReference>
<dbReference type="NCBIfam" id="TIGR02273">
    <property type="entry name" value="16S_RimM"/>
    <property type="match status" value="1"/>
</dbReference>
<dbReference type="PANTHER" id="PTHR33692">
    <property type="entry name" value="RIBOSOME MATURATION FACTOR RIMM"/>
    <property type="match status" value="1"/>
</dbReference>
<dbReference type="PANTHER" id="PTHR33692:SF1">
    <property type="entry name" value="RIBOSOME MATURATION FACTOR RIMM"/>
    <property type="match status" value="1"/>
</dbReference>
<dbReference type="Pfam" id="PF24986">
    <property type="entry name" value="PRC_RimM"/>
    <property type="match status" value="1"/>
</dbReference>
<dbReference type="Pfam" id="PF01782">
    <property type="entry name" value="RimM"/>
    <property type="match status" value="1"/>
</dbReference>
<dbReference type="SUPFAM" id="SSF50346">
    <property type="entry name" value="PRC-barrel domain"/>
    <property type="match status" value="1"/>
</dbReference>
<dbReference type="SUPFAM" id="SSF50447">
    <property type="entry name" value="Translation proteins"/>
    <property type="match status" value="1"/>
</dbReference>
<keyword id="KW-0143">Chaperone</keyword>
<keyword id="KW-0963">Cytoplasm</keyword>
<keyword id="KW-0690">Ribosome biogenesis</keyword>
<keyword id="KW-0698">rRNA processing</keyword>
<organism>
    <name type="scientific">Rhodopseudomonas palustris (strain BisB18)</name>
    <dbReference type="NCBI Taxonomy" id="316056"/>
    <lineage>
        <taxon>Bacteria</taxon>
        <taxon>Pseudomonadati</taxon>
        <taxon>Pseudomonadota</taxon>
        <taxon>Alphaproteobacteria</taxon>
        <taxon>Hyphomicrobiales</taxon>
        <taxon>Nitrobacteraceae</taxon>
        <taxon>Rhodopseudomonas</taxon>
    </lineage>
</organism>
<reference key="1">
    <citation type="submission" date="2006-03" db="EMBL/GenBank/DDBJ databases">
        <title>Complete sequence of Rhodopseudomonas palustris BisB18.</title>
        <authorList>
            <consortium name="US DOE Joint Genome Institute"/>
            <person name="Copeland A."/>
            <person name="Lucas S."/>
            <person name="Lapidus A."/>
            <person name="Barry K."/>
            <person name="Detter J.C."/>
            <person name="Glavina del Rio T."/>
            <person name="Hammon N."/>
            <person name="Israni S."/>
            <person name="Dalin E."/>
            <person name="Tice H."/>
            <person name="Pitluck S."/>
            <person name="Chain P."/>
            <person name="Malfatti S."/>
            <person name="Shin M."/>
            <person name="Vergez L."/>
            <person name="Schmutz J."/>
            <person name="Larimer F."/>
            <person name="Land M."/>
            <person name="Hauser L."/>
            <person name="Pelletier D.A."/>
            <person name="Kyrpides N."/>
            <person name="Anderson I."/>
            <person name="Oda Y."/>
            <person name="Harwood C.S."/>
            <person name="Richardson P."/>
        </authorList>
    </citation>
    <scope>NUCLEOTIDE SEQUENCE [LARGE SCALE GENOMIC DNA]</scope>
    <source>
        <strain>BisB18</strain>
    </source>
</reference>
<accession>Q21CT8</accession>
<comment type="function">
    <text evidence="1">An accessory protein needed during the final step in the assembly of 30S ribosomal subunit, possibly for assembly of the head region. Essential for efficient processing of 16S rRNA. May be needed both before and after RbfA during the maturation of 16S rRNA. It has affinity for free ribosomal 30S subunits but not for 70S ribosomes.</text>
</comment>
<comment type="subunit">
    <text evidence="1">Binds ribosomal protein uS19.</text>
</comment>
<comment type="subcellular location">
    <subcellularLocation>
        <location evidence="1">Cytoplasm</location>
    </subcellularLocation>
</comment>
<comment type="domain">
    <text evidence="1">The PRC barrel domain binds ribosomal protein uS19.</text>
</comment>
<comment type="similarity">
    <text evidence="1">Belongs to the RimM family.</text>
</comment>
<sequence length="176" mass="18460">MPADKICVARIGAPHGVRGAVKLWPFTADPLAVLDYGPLSTKDGKRSFEVETAREAKGHLVATLQGVVSREDAERLNGVELYIDRAQLPPPEEGEYYHADLIGLAAVDAAGAPIGKVLAIHNFGAGDIIEIAPPSGPTLLLPFTNAVVPTVDIASGRVVIELPAEIEGDDPAQADI</sequence>
<protein>
    <recommendedName>
        <fullName evidence="1">Ribosome maturation factor RimM</fullName>
    </recommendedName>
</protein>